<accession>A6T748</accession>
<comment type="function">
    <text evidence="1">Necessary for the introduction of cis unsaturation into fatty acids. Catalyzes the dehydration of (3R)-3-hydroxydecanoyl-ACP to E-(2)-decenoyl-ACP and then its isomerization to Z-(3)-decenoyl-ACP. Can catalyze the dehydratase reaction for beta-hydroxyacyl-ACPs with saturated chain lengths up to 16:0, being most active on intermediate chain length.</text>
</comment>
<comment type="catalytic activity">
    <reaction evidence="1">
        <text>a (3R)-hydroxyacyl-[ACP] = a (2E)-enoyl-[ACP] + H2O</text>
        <dbReference type="Rhea" id="RHEA:13097"/>
        <dbReference type="Rhea" id="RHEA-COMP:9925"/>
        <dbReference type="Rhea" id="RHEA-COMP:9945"/>
        <dbReference type="ChEBI" id="CHEBI:15377"/>
        <dbReference type="ChEBI" id="CHEBI:78784"/>
        <dbReference type="ChEBI" id="CHEBI:78827"/>
        <dbReference type="EC" id="4.2.1.59"/>
    </reaction>
</comment>
<comment type="catalytic activity">
    <reaction evidence="1">
        <text>(3R)-hydroxydecanoyl-[ACP] = (2E)-decenoyl-[ACP] + H2O</text>
        <dbReference type="Rhea" id="RHEA:41860"/>
        <dbReference type="Rhea" id="RHEA-COMP:9638"/>
        <dbReference type="Rhea" id="RHEA-COMP:9639"/>
        <dbReference type="ChEBI" id="CHEBI:15377"/>
        <dbReference type="ChEBI" id="CHEBI:78466"/>
        <dbReference type="ChEBI" id="CHEBI:78467"/>
    </reaction>
</comment>
<comment type="catalytic activity">
    <reaction evidence="1">
        <text>(2E)-decenoyl-[ACP] = (3Z)-decenoyl-[ACP]</text>
        <dbReference type="Rhea" id="RHEA:23568"/>
        <dbReference type="Rhea" id="RHEA-COMP:9639"/>
        <dbReference type="Rhea" id="RHEA-COMP:9927"/>
        <dbReference type="ChEBI" id="CHEBI:78467"/>
        <dbReference type="ChEBI" id="CHEBI:78798"/>
        <dbReference type="EC" id="5.3.3.14"/>
    </reaction>
</comment>
<comment type="pathway">
    <text evidence="1">Lipid metabolism; fatty acid biosynthesis.</text>
</comment>
<comment type="subunit">
    <text evidence="1">Homodimer.</text>
</comment>
<comment type="subcellular location">
    <subcellularLocation>
        <location evidence="1">Cytoplasm</location>
    </subcellularLocation>
</comment>
<comment type="similarity">
    <text evidence="1">Belongs to the thioester dehydratase family. FabA subfamily.</text>
</comment>
<keyword id="KW-0963">Cytoplasm</keyword>
<keyword id="KW-0275">Fatty acid biosynthesis</keyword>
<keyword id="KW-0276">Fatty acid metabolism</keyword>
<keyword id="KW-0413">Isomerase</keyword>
<keyword id="KW-0444">Lipid biosynthesis</keyword>
<keyword id="KW-0443">Lipid metabolism</keyword>
<keyword id="KW-0456">Lyase</keyword>
<organism>
    <name type="scientific">Klebsiella pneumoniae subsp. pneumoniae (strain ATCC 700721 / MGH 78578)</name>
    <dbReference type="NCBI Taxonomy" id="272620"/>
    <lineage>
        <taxon>Bacteria</taxon>
        <taxon>Pseudomonadati</taxon>
        <taxon>Pseudomonadota</taxon>
        <taxon>Gammaproteobacteria</taxon>
        <taxon>Enterobacterales</taxon>
        <taxon>Enterobacteriaceae</taxon>
        <taxon>Klebsiella/Raoultella group</taxon>
        <taxon>Klebsiella</taxon>
        <taxon>Klebsiella pneumoniae complex</taxon>
    </lineage>
</organism>
<sequence>MVDKRESYTKEDLLASGRGELFGAKGPQLPAPNMLMMDRVIKMTETGGNYDKGYVEAELDINPDLWFFGCHFIGDPVMPGCLGLDAMWQLVGFYLGWLGGEGKGRALGVGEVKFTGQVLPTAKKVTYRIHFKRIVNRRLIMGLADGEVLVDDRLIYTANDLKVGLFQDTSAF</sequence>
<feature type="chain" id="PRO_1000049826" description="3-hydroxydecanoyl-[acyl-carrier-protein] dehydratase">
    <location>
        <begin position="1"/>
        <end position="172"/>
    </location>
</feature>
<feature type="active site" evidence="1">
    <location>
        <position position="71"/>
    </location>
</feature>
<gene>
    <name evidence="1" type="primary">fabA</name>
    <name type="ordered locus">KPN78578_09580</name>
    <name type="ORF">KPN_00983</name>
</gene>
<proteinExistence type="inferred from homology"/>
<reference key="1">
    <citation type="submission" date="2006-09" db="EMBL/GenBank/DDBJ databases">
        <authorList>
            <consortium name="The Klebsiella pneumonia Genome Sequencing Project"/>
            <person name="McClelland M."/>
            <person name="Sanderson E.K."/>
            <person name="Spieth J."/>
            <person name="Clifton W.S."/>
            <person name="Latreille P."/>
            <person name="Sabo A."/>
            <person name="Pepin K."/>
            <person name="Bhonagiri V."/>
            <person name="Porwollik S."/>
            <person name="Ali J."/>
            <person name="Wilson R.K."/>
        </authorList>
    </citation>
    <scope>NUCLEOTIDE SEQUENCE [LARGE SCALE GENOMIC DNA]</scope>
    <source>
        <strain>ATCC 700721 / MGH 78578</strain>
    </source>
</reference>
<dbReference type="EC" id="4.2.1.59" evidence="1"/>
<dbReference type="EC" id="5.3.3.14" evidence="1"/>
<dbReference type="EMBL" id="CP000647">
    <property type="protein sequence ID" value="ABR76419.1"/>
    <property type="molecule type" value="Genomic_DNA"/>
</dbReference>
<dbReference type="RefSeq" id="WP_002898398.1">
    <property type="nucleotide sequence ID" value="NC_009648.1"/>
</dbReference>
<dbReference type="SMR" id="A6T748"/>
<dbReference type="STRING" id="272620.KPN_00983"/>
<dbReference type="jPOST" id="A6T748"/>
<dbReference type="PaxDb" id="272620-KPN_00983"/>
<dbReference type="EnsemblBacteria" id="ABR76419">
    <property type="protein sequence ID" value="ABR76419"/>
    <property type="gene ID" value="KPN_00983"/>
</dbReference>
<dbReference type="KEGG" id="kpn:KPN_00983"/>
<dbReference type="HOGENOM" id="CLU_097925_0_0_6"/>
<dbReference type="UniPathway" id="UPA00094"/>
<dbReference type="Proteomes" id="UP000000265">
    <property type="component" value="Chromosome"/>
</dbReference>
<dbReference type="GO" id="GO:0005737">
    <property type="term" value="C:cytoplasm"/>
    <property type="evidence" value="ECO:0007669"/>
    <property type="project" value="UniProtKB-SubCell"/>
</dbReference>
<dbReference type="GO" id="GO:0019171">
    <property type="term" value="F:(3R)-hydroxyacyl-[acyl-carrier-protein] dehydratase activity"/>
    <property type="evidence" value="ECO:0007669"/>
    <property type="project" value="UniProtKB-UniRule"/>
</dbReference>
<dbReference type="GO" id="GO:0034017">
    <property type="term" value="F:trans-2-decenoyl-acyl-carrier-protein isomerase activity"/>
    <property type="evidence" value="ECO:0007669"/>
    <property type="project" value="UniProtKB-UniRule"/>
</dbReference>
<dbReference type="GO" id="GO:0006636">
    <property type="term" value="P:unsaturated fatty acid biosynthetic process"/>
    <property type="evidence" value="ECO:0007669"/>
    <property type="project" value="UniProtKB-UniRule"/>
</dbReference>
<dbReference type="CDD" id="cd01287">
    <property type="entry name" value="FabA"/>
    <property type="match status" value="1"/>
</dbReference>
<dbReference type="FunFam" id="3.10.129.10:FF:000003">
    <property type="entry name" value="3-hydroxydecanoyl-[acyl-carrier-protein] dehydratase"/>
    <property type="match status" value="1"/>
</dbReference>
<dbReference type="Gene3D" id="3.10.129.10">
    <property type="entry name" value="Hotdog Thioesterase"/>
    <property type="match status" value="1"/>
</dbReference>
<dbReference type="HAMAP" id="MF_00405">
    <property type="entry name" value="FabA"/>
    <property type="match status" value="1"/>
</dbReference>
<dbReference type="InterPro" id="IPR010083">
    <property type="entry name" value="FabA"/>
</dbReference>
<dbReference type="InterPro" id="IPR013114">
    <property type="entry name" value="FabA_FabZ"/>
</dbReference>
<dbReference type="InterPro" id="IPR029069">
    <property type="entry name" value="HotDog_dom_sf"/>
</dbReference>
<dbReference type="NCBIfam" id="TIGR01749">
    <property type="entry name" value="fabA"/>
    <property type="match status" value="1"/>
</dbReference>
<dbReference type="NCBIfam" id="NF003509">
    <property type="entry name" value="PRK05174.1"/>
    <property type="match status" value="1"/>
</dbReference>
<dbReference type="PANTHER" id="PTHR30272">
    <property type="entry name" value="3-HYDROXYACYL-[ACYL-CARRIER-PROTEIN] DEHYDRATASE"/>
    <property type="match status" value="1"/>
</dbReference>
<dbReference type="PANTHER" id="PTHR30272:SF8">
    <property type="entry name" value="3-HYDROXYDECANOYL-[ACYL-CARRIER-PROTEIN] DEHYDRATASE"/>
    <property type="match status" value="1"/>
</dbReference>
<dbReference type="Pfam" id="PF07977">
    <property type="entry name" value="FabA"/>
    <property type="match status" value="1"/>
</dbReference>
<dbReference type="SUPFAM" id="SSF54637">
    <property type="entry name" value="Thioesterase/thiol ester dehydrase-isomerase"/>
    <property type="match status" value="1"/>
</dbReference>
<protein>
    <recommendedName>
        <fullName evidence="1">3-hydroxydecanoyl-[acyl-carrier-protein] dehydratase</fullName>
        <ecNumber evidence="1">4.2.1.59</ecNumber>
    </recommendedName>
    <alternativeName>
        <fullName evidence="1">3-hydroxyacyl-[acyl-carrier-protein] dehydratase FabA</fullName>
    </alternativeName>
    <alternativeName>
        <fullName evidence="1">Beta-hydroxydecanoyl thioester dehydrase</fullName>
    </alternativeName>
    <alternativeName>
        <fullName evidence="1">Trans-2-decenoyl-[acyl-carrier-protein] isomerase</fullName>
        <ecNumber evidence="1">5.3.3.14</ecNumber>
    </alternativeName>
</protein>
<evidence type="ECO:0000255" key="1">
    <source>
        <dbReference type="HAMAP-Rule" id="MF_00405"/>
    </source>
</evidence>
<name>FABA_KLEP7</name>